<evidence type="ECO:0000255" key="1">
    <source>
        <dbReference type="HAMAP-Rule" id="MF_01368"/>
    </source>
</evidence>
<evidence type="ECO:0000305" key="2"/>
<accession>B2FQK9</accession>
<comment type="subunit">
    <text evidence="1">Part of the 50S ribosomal subunit. Contacts protein L32.</text>
</comment>
<comment type="similarity">
    <text evidence="1">Belongs to the bacterial ribosomal protein bL17 family.</text>
</comment>
<protein>
    <recommendedName>
        <fullName evidence="1">Large ribosomal subunit protein bL17</fullName>
    </recommendedName>
    <alternativeName>
        <fullName evidence="2">50S ribosomal protein L17</fullName>
    </alternativeName>
</protein>
<sequence>MRHQKSGRKFSRTSAHREAMFKNMAASLFKHELIKTTLPKAKELRRVAEPLITLAKVDSVANRRLAFARLRDNEAVGNLFTILGPRYANRPGGYLRLLKCGFRAGDNAPMAYVELVDRPVVAEEVAE</sequence>
<feature type="chain" id="PRO_1000144489" description="Large ribosomal subunit protein bL17">
    <location>
        <begin position="1"/>
        <end position="127"/>
    </location>
</feature>
<proteinExistence type="inferred from homology"/>
<keyword id="KW-1185">Reference proteome</keyword>
<keyword id="KW-0687">Ribonucleoprotein</keyword>
<keyword id="KW-0689">Ribosomal protein</keyword>
<name>RL17_STRMK</name>
<organism>
    <name type="scientific">Stenotrophomonas maltophilia (strain K279a)</name>
    <dbReference type="NCBI Taxonomy" id="522373"/>
    <lineage>
        <taxon>Bacteria</taxon>
        <taxon>Pseudomonadati</taxon>
        <taxon>Pseudomonadota</taxon>
        <taxon>Gammaproteobacteria</taxon>
        <taxon>Lysobacterales</taxon>
        <taxon>Lysobacteraceae</taxon>
        <taxon>Stenotrophomonas</taxon>
        <taxon>Stenotrophomonas maltophilia group</taxon>
    </lineage>
</organism>
<dbReference type="EMBL" id="AM743169">
    <property type="protein sequence ID" value="CAQ44500.1"/>
    <property type="molecule type" value="Genomic_DNA"/>
</dbReference>
<dbReference type="RefSeq" id="WP_005408217.1">
    <property type="nucleotide sequence ID" value="NC_010943.1"/>
</dbReference>
<dbReference type="SMR" id="B2FQK9"/>
<dbReference type="EnsemblBacteria" id="CAQ44500">
    <property type="protein sequence ID" value="CAQ44500"/>
    <property type="gene ID" value="Smlt0933"/>
</dbReference>
<dbReference type="GeneID" id="97259959"/>
<dbReference type="KEGG" id="sml:Smlt0933"/>
<dbReference type="eggNOG" id="COG0203">
    <property type="taxonomic scope" value="Bacteria"/>
</dbReference>
<dbReference type="HOGENOM" id="CLU_074407_2_0_6"/>
<dbReference type="Proteomes" id="UP000008840">
    <property type="component" value="Chromosome"/>
</dbReference>
<dbReference type="GO" id="GO:0022625">
    <property type="term" value="C:cytosolic large ribosomal subunit"/>
    <property type="evidence" value="ECO:0007669"/>
    <property type="project" value="TreeGrafter"/>
</dbReference>
<dbReference type="GO" id="GO:0003735">
    <property type="term" value="F:structural constituent of ribosome"/>
    <property type="evidence" value="ECO:0007669"/>
    <property type="project" value="InterPro"/>
</dbReference>
<dbReference type="GO" id="GO:0006412">
    <property type="term" value="P:translation"/>
    <property type="evidence" value="ECO:0007669"/>
    <property type="project" value="UniProtKB-UniRule"/>
</dbReference>
<dbReference type="FunFam" id="3.90.1030.10:FF:000001">
    <property type="entry name" value="50S ribosomal protein L17"/>
    <property type="match status" value="1"/>
</dbReference>
<dbReference type="Gene3D" id="3.90.1030.10">
    <property type="entry name" value="Ribosomal protein L17"/>
    <property type="match status" value="1"/>
</dbReference>
<dbReference type="HAMAP" id="MF_01368">
    <property type="entry name" value="Ribosomal_bL17"/>
    <property type="match status" value="1"/>
</dbReference>
<dbReference type="InterPro" id="IPR000456">
    <property type="entry name" value="Ribosomal_bL17"/>
</dbReference>
<dbReference type="InterPro" id="IPR047859">
    <property type="entry name" value="Ribosomal_bL17_CS"/>
</dbReference>
<dbReference type="InterPro" id="IPR036373">
    <property type="entry name" value="Ribosomal_bL17_sf"/>
</dbReference>
<dbReference type="NCBIfam" id="TIGR00059">
    <property type="entry name" value="L17"/>
    <property type="match status" value="1"/>
</dbReference>
<dbReference type="PANTHER" id="PTHR14413:SF16">
    <property type="entry name" value="LARGE RIBOSOMAL SUBUNIT PROTEIN BL17M"/>
    <property type="match status" value="1"/>
</dbReference>
<dbReference type="PANTHER" id="PTHR14413">
    <property type="entry name" value="RIBOSOMAL PROTEIN L17"/>
    <property type="match status" value="1"/>
</dbReference>
<dbReference type="Pfam" id="PF01196">
    <property type="entry name" value="Ribosomal_L17"/>
    <property type="match status" value="1"/>
</dbReference>
<dbReference type="SUPFAM" id="SSF64263">
    <property type="entry name" value="Prokaryotic ribosomal protein L17"/>
    <property type="match status" value="1"/>
</dbReference>
<dbReference type="PROSITE" id="PS01167">
    <property type="entry name" value="RIBOSOMAL_L17"/>
    <property type="match status" value="1"/>
</dbReference>
<gene>
    <name evidence="1" type="primary">rplQ</name>
    <name type="ordered locus">Smlt0933</name>
</gene>
<reference key="1">
    <citation type="journal article" date="2008" name="Genome Biol.">
        <title>The complete genome, comparative and functional analysis of Stenotrophomonas maltophilia reveals an organism heavily shielded by drug resistance determinants.</title>
        <authorList>
            <person name="Crossman L.C."/>
            <person name="Gould V.C."/>
            <person name="Dow J.M."/>
            <person name="Vernikos G.S."/>
            <person name="Okazaki A."/>
            <person name="Sebaihia M."/>
            <person name="Saunders D."/>
            <person name="Arrowsmith C."/>
            <person name="Carver T."/>
            <person name="Peters N."/>
            <person name="Adlem E."/>
            <person name="Kerhornou A."/>
            <person name="Lord A."/>
            <person name="Murphy L."/>
            <person name="Seeger K."/>
            <person name="Squares R."/>
            <person name="Rutter S."/>
            <person name="Quail M.A."/>
            <person name="Rajandream M.A."/>
            <person name="Harris D."/>
            <person name="Churcher C."/>
            <person name="Bentley S.D."/>
            <person name="Parkhill J."/>
            <person name="Thomson N.R."/>
            <person name="Avison M.B."/>
        </authorList>
    </citation>
    <scope>NUCLEOTIDE SEQUENCE [LARGE SCALE GENOMIC DNA]</scope>
    <source>
        <strain>K279a</strain>
    </source>
</reference>